<gene>
    <name evidence="1" type="primary">glnD</name>
    <name type="ordered locus">XCV1486</name>
</gene>
<reference key="1">
    <citation type="journal article" date="2005" name="J. Bacteriol.">
        <title>Insights into genome plasticity and pathogenicity of the plant pathogenic Bacterium Xanthomonas campestris pv. vesicatoria revealed by the complete genome sequence.</title>
        <authorList>
            <person name="Thieme F."/>
            <person name="Koebnik R."/>
            <person name="Bekel T."/>
            <person name="Berger C."/>
            <person name="Boch J."/>
            <person name="Buettner D."/>
            <person name="Caldana C."/>
            <person name="Gaigalat L."/>
            <person name="Goesmann A."/>
            <person name="Kay S."/>
            <person name="Kirchner O."/>
            <person name="Lanz C."/>
            <person name="Linke B."/>
            <person name="McHardy A.C."/>
            <person name="Meyer F."/>
            <person name="Mittenhuber G."/>
            <person name="Nies D.H."/>
            <person name="Niesbach-Kloesgen U."/>
            <person name="Patschkowski T."/>
            <person name="Rueckert C."/>
            <person name="Rupp O."/>
            <person name="Schneiker S."/>
            <person name="Schuster S.C."/>
            <person name="Vorhoelter F.J."/>
            <person name="Weber E."/>
            <person name="Puehler A."/>
            <person name="Bonas U."/>
            <person name="Bartels D."/>
            <person name="Kaiser O."/>
        </authorList>
    </citation>
    <scope>NUCLEOTIDE SEQUENCE [LARGE SCALE GENOMIC DNA]</scope>
    <source>
        <strain>85-10</strain>
    </source>
</reference>
<accession>Q3BVJ6</accession>
<evidence type="ECO:0000255" key="1">
    <source>
        <dbReference type="HAMAP-Rule" id="MF_00277"/>
    </source>
</evidence>
<evidence type="ECO:0000255" key="2">
    <source>
        <dbReference type="PROSITE-ProRule" id="PRU01175"/>
    </source>
</evidence>
<protein>
    <recommendedName>
        <fullName evidence="1">Bifunctional uridylyltransferase/uridylyl-removing enzyme</fullName>
        <shortName evidence="1">UTase/UR</shortName>
    </recommendedName>
    <alternativeName>
        <fullName evidence="1">Bifunctional [protein-PII] modification enzyme</fullName>
    </alternativeName>
    <alternativeName>
        <fullName evidence="1">Bifunctional nitrogen sensor protein</fullName>
    </alternativeName>
    <domain>
        <recommendedName>
            <fullName evidence="1">[Protein-PII] uridylyltransferase</fullName>
            <shortName evidence="1">PII uridylyltransferase</shortName>
            <shortName evidence="1">UTase</shortName>
            <ecNumber evidence="1">2.7.7.59</ecNumber>
        </recommendedName>
    </domain>
    <domain>
        <recommendedName>
            <fullName evidence="1">[Protein-PII]-UMP uridylyl-removing enzyme</fullName>
            <shortName evidence="1">UR</shortName>
            <ecNumber evidence="1">3.1.4.-</ecNumber>
        </recommendedName>
    </domain>
</protein>
<comment type="function">
    <text evidence="1">Modifies, by uridylylation and deuridylylation, the PII regulatory proteins (GlnB and homologs), in response to the nitrogen status of the cell that GlnD senses through the glutamine level. Under low glutamine levels, catalyzes the conversion of the PII proteins and UTP to PII-UMP and PPi, while under higher glutamine levels, GlnD hydrolyzes PII-UMP to PII and UMP (deuridylylation). Thus, controls uridylylation state and activity of the PII proteins, and plays an important role in the regulation of nitrogen assimilation and metabolism.</text>
</comment>
<comment type="catalytic activity">
    <reaction evidence="1">
        <text>[protein-PII]-L-tyrosine + UTP = [protein-PII]-uridylyl-L-tyrosine + diphosphate</text>
        <dbReference type="Rhea" id="RHEA:13673"/>
        <dbReference type="Rhea" id="RHEA-COMP:12147"/>
        <dbReference type="Rhea" id="RHEA-COMP:12148"/>
        <dbReference type="ChEBI" id="CHEBI:33019"/>
        <dbReference type="ChEBI" id="CHEBI:46398"/>
        <dbReference type="ChEBI" id="CHEBI:46858"/>
        <dbReference type="ChEBI" id="CHEBI:90602"/>
        <dbReference type="EC" id="2.7.7.59"/>
    </reaction>
</comment>
<comment type="catalytic activity">
    <reaction evidence="1">
        <text>[protein-PII]-uridylyl-L-tyrosine + H2O = [protein-PII]-L-tyrosine + UMP + H(+)</text>
        <dbReference type="Rhea" id="RHEA:48600"/>
        <dbReference type="Rhea" id="RHEA-COMP:12147"/>
        <dbReference type="Rhea" id="RHEA-COMP:12148"/>
        <dbReference type="ChEBI" id="CHEBI:15377"/>
        <dbReference type="ChEBI" id="CHEBI:15378"/>
        <dbReference type="ChEBI" id="CHEBI:46858"/>
        <dbReference type="ChEBI" id="CHEBI:57865"/>
        <dbReference type="ChEBI" id="CHEBI:90602"/>
    </reaction>
</comment>
<comment type="cofactor">
    <cofactor evidence="1">
        <name>Mg(2+)</name>
        <dbReference type="ChEBI" id="CHEBI:18420"/>
    </cofactor>
</comment>
<comment type="activity regulation">
    <text evidence="1">Uridylyltransferase (UTase) activity is inhibited by glutamine, while glutamine activates uridylyl-removing (UR) activity.</text>
</comment>
<comment type="domain">
    <text evidence="1">Has four distinct domains: an N-terminal nucleotidyltransferase (NT) domain responsible for UTase activity, a central HD domain that encodes UR activity, and two C-terminal ACT domains that seem to have a role in glutamine sensing.</text>
</comment>
<comment type="similarity">
    <text evidence="1">Belongs to the GlnD family.</text>
</comment>
<keyword id="KW-0378">Hydrolase</keyword>
<keyword id="KW-0460">Magnesium</keyword>
<keyword id="KW-0511">Multifunctional enzyme</keyword>
<keyword id="KW-0548">Nucleotidyltransferase</keyword>
<keyword id="KW-0677">Repeat</keyword>
<keyword id="KW-0808">Transferase</keyword>
<dbReference type="EC" id="2.7.7.59" evidence="1"/>
<dbReference type="EC" id="3.1.4.-" evidence="1"/>
<dbReference type="EMBL" id="AM039952">
    <property type="protein sequence ID" value="CAJ23117.1"/>
    <property type="molecule type" value="Genomic_DNA"/>
</dbReference>
<dbReference type="SMR" id="Q3BVJ6"/>
<dbReference type="STRING" id="456327.BJD11_15210"/>
<dbReference type="KEGG" id="xcv:XCV1486"/>
<dbReference type="eggNOG" id="COG2844">
    <property type="taxonomic scope" value="Bacteria"/>
</dbReference>
<dbReference type="HOGENOM" id="CLU_012833_0_0_6"/>
<dbReference type="Proteomes" id="UP000007069">
    <property type="component" value="Chromosome"/>
</dbReference>
<dbReference type="GO" id="GO:0008773">
    <property type="term" value="F:[protein-PII] uridylyltransferase activity"/>
    <property type="evidence" value="ECO:0007669"/>
    <property type="project" value="UniProtKB-UniRule"/>
</dbReference>
<dbReference type="GO" id="GO:0008081">
    <property type="term" value="F:phosphoric diester hydrolase activity"/>
    <property type="evidence" value="ECO:0007669"/>
    <property type="project" value="UniProtKB-UniRule"/>
</dbReference>
<dbReference type="GO" id="GO:0006808">
    <property type="term" value="P:regulation of nitrogen utilization"/>
    <property type="evidence" value="ECO:0007669"/>
    <property type="project" value="UniProtKB-UniRule"/>
</dbReference>
<dbReference type="CDD" id="cd04899">
    <property type="entry name" value="ACT_ACR-UUR-like_2"/>
    <property type="match status" value="1"/>
</dbReference>
<dbReference type="CDD" id="cd04900">
    <property type="entry name" value="ACT_UUR-like_1"/>
    <property type="match status" value="1"/>
</dbReference>
<dbReference type="CDD" id="cd00077">
    <property type="entry name" value="HDc"/>
    <property type="match status" value="1"/>
</dbReference>
<dbReference type="CDD" id="cd05401">
    <property type="entry name" value="NT_GlnE_GlnD_like"/>
    <property type="match status" value="1"/>
</dbReference>
<dbReference type="Gene3D" id="3.30.70.260">
    <property type="match status" value="1"/>
</dbReference>
<dbReference type="Gene3D" id="1.10.3090.10">
    <property type="entry name" value="cca-adding enzyme, domain 2"/>
    <property type="match status" value="1"/>
</dbReference>
<dbReference type="HAMAP" id="MF_00277">
    <property type="entry name" value="PII_uridylyl_transf"/>
    <property type="match status" value="1"/>
</dbReference>
<dbReference type="InterPro" id="IPR045865">
    <property type="entry name" value="ACT-like_dom_sf"/>
</dbReference>
<dbReference type="InterPro" id="IPR002912">
    <property type="entry name" value="ACT_dom"/>
</dbReference>
<dbReference type="InterPro" id="IPR003607">
    <property type="entry name" value="HD/PDEase_dom"/>
</dbReference>
<dbReference type="InterPro" id="IPR006674">
    <property type="entry name" value="HD_domain"/>
</dbReference>
<dbReference type="InterPro" id="IPR043519">
    <property type="entry name" value="NT_sf"/>
</dbReference>
<dbReference type="InterPro" id="IPR013546">
    <property type="entry name" value="PII_UdlTrfase/GS_AdlTrfase"/>
</dbReference>
<dbReference type="InterPro" id="IPR002934">
    <property type="entry name" value="Polymerase_NTP_transf_dom"/>
</dbReference>
<dbReference type="InterPro" id="IPR010043">
    <property type="entry name" value="UTase/UR"/>
</dbReference>
<dbReference type="NCBIfam" id="NF003347">
    <property type="entry name" value="PRK04374.1"/>
    <property type="match status" value="1"/>
</dbReference>
<dbReference type="NCBIfam" id="TIGR01693">
    <property type="entry name" value="UTase_glnD"/>
    <property type="match status" value="1"/>
</dbReference>
<dbReference type="PANTHER" id="PTHR47320">
    <property type="entry name" value="BIFUNCTIONAL URIDYLYLTRANSFERASE/URIDYLYL-REMOVING ENZYME"/>
    <property type="match status" value="1"/>
</dbReference>
<dbReference type="PANTHER" id="PTHR47320:SF1">
    <property type="entry name" value="BIFUNCTIONAL URIDYLYLTRANSFERASE_URIDYLYL-REMOVING ENZYME"/>
    <property type="match status" value="1"/>
</dbReference>
<dbReference type="Pfam" id="PF08335">
    <property type="entry name" value="GlnD_UR_UTase"/>
    <property type="match status" value="1"/>
</dbReference>
<dbReference type="Pfam" id="PF01966">
    <property type="entry name" value="HD"/>
    <property type="match status" value="1"/>
</dbReference>
<dbReference type="Pfam" id="PF01909">
    <property type="entry name" value="NTP_transf_2"/>
    <property type="match status" value="1"/>
</dbReference>
<dbReference type="PIRSF" id="PIRSF006288">
    <property type="entry name" value="PII_uridyltransf"/>
    <property type="match status" value="1"/>
</dbReference>
<dbReference type="SMART" id="SM00471">
    <property type="entry name" value="HDc"/>
    <property type="match status" value="1"/>
</dbReference>
<dbReference type="SUPFAM" id="SSF55021">
    <property type="entry name" value="ACT-like"/>
    <property type="match status" value="2"/>
</dbReference>
<dbReference type="SUPFAM" id="SSF109604">
    <property type="entry name" value="HD-domain/PDEase-like"/>
    <property type="match status" value="1"/>
</dbReference>
<dbReference type="SUPFAM" id="SSF81301">
    <property type="entry name" value="Nucleotidyltransferase"/>
    <property type="match status" value="1"/>
</dbReference>
<dbReference type="SUPFAM" id="SSF81593">
    <property type="entry name" value="Nucleotidyltransferase substrate binding subunit/domain"/>
    <property type="match status" value="1"/>
</dbReference>
<dbReference type="PROSITE" id="PS51671">
    <property type="entry name" value="ACT"/>
    <property type="match status" value="2"/>
</dbReference>
<dbReference type="PROSITE" id="PS51831">
    <property type="entry name" value="HD"/>
    <property type="match status" value="1"/>
</dbReference>
<name>GLND_XANE5</name>
<proteinExistence type="inferred from homology"/>
<organism>
    <name type="scientific">Xanthomonas euvesicatoria pv. vesicatoria (strain 85-10)</name>
    <name type="common">Xanthomonas campestris pv. vesicatoria</name>
    <dbReference type="NCBI Taxonomy" id="316273"/>
    <lineage>
        <taxon>Bacteria</taxon>
        <taxon>Pseudomonadati</taxon>
        <taxon>Pseudomonadota</taxon>
        <taxon>Gammaproteobacteria</taxon>
        <taxon>Lysobacterales</taxon>
        <taxon>Lysobacteraceae</taxon>
        <taxon>Xanthomonas</taxon>
    </lineage>
</organism>
<sequence length="869" mass="97326">MTDTPAERPDPGVAGDADWAAQARPLLVHADMRLCKRFDQGEPIERLVALRARAVDQLMRNAWMRCIPADSGLSLHAVGGYGRGELFPRSDVDVLVLGDTAAQQQHEQALARLFALLWDVGLPISHAVRSPAQCTAAAADQTVLTALIESRALVADGQARAALATAIAPPQVWPPRDFFQAKREELLARHQRFGDTADNLEPDIKDGPGGLRDLQTLGWMALRAFGVKDLEALVGLGHVGFDEAAALRREREELARLRFGLHIVANRPEERLRFDYQKTLAERLGFADDPESLGVEKMMQRFYRSAALIRRISDRLLQRFEEQFDGEATPEPLGGGFSLRRGYLAADAESWPDGDVLQVFALFAQWAAHREVRGLHSLTARALAEVLRDLPAYDIADATARERFMALLRGPRAVETLNRMARLGVLGQWIPAFASVSGRMQFDLFHVYTVDQHTLMVLRNIALFAAGRADERFSIAHEVWPRLRKPELLLLAGLFHDIAKGRGGDHSELGAVDARAFCLAHRLSEGDTELVTWLVEQHLRMSVTAQKQDISDPEVIHRFATLVGTRERLDYLYLLTCADIAGTSPKLWNAWKDRLLADLYFAARRALREGLEHPPPREERLREARESARTLMQAQGHDDVTIDRQFAGMPDENFLRFRPEQLAWQAASLIEVEIGQTLVKARRAVPDNDALEVFVYSPDRDGLFAAIVATLDRKGYGIHRARVLDAPHDAIFDVFEVLPQETYADGDPQRLAATLRQVLAGDLHKVRPARRAVPRQLRHFRFAPRVEFSESAGGRRTRISLVAPDRPGLLADVAHVLRMQHLRVHDARIATFGERAEDQFQITDEHDRPLSESARQALRDALCACLDPV</sequence>
<feature type="chain" id="PRO_0000231697" description="Bifunctional uridylyltransferase/uridylyl-removing enzyme">
    <location>
        <begin position="1"/>
        <end position="869"/>
    </location>
</feature>
<feature type="domain" description="HD" evidence="2">
    <location>
        <begin position="450"/>
        <end position="572"/>
    </location>
</feature>
<feature type="domain" description="ACT 1" evidence="1">
    <location>
        <begin position="692"/>
        <end position="774"/>
    </location>
</feature>
<feature type="domain" description="ACT 2" evidence="1">
    <location>
        <begin position="798"/>
        <end position="869"/>
    </location>
</feature>
<feature type="region of interest" description="Uridylyltransferase">
    <location>
        <begin position="1"/>
        <end position="332"/>
    </location>
</feature>
<feature type="region of interest" description="Uridylyl-removing">
    <location>
        <begin position="333"/>
        <end position="691"/>
    </location>
</feature>